<reference key="1">
    <citation type="submission" date="2007-06" db="EMBL/GenBank/DDBJ databases">
        <authorList>
            <person name="Brinkac L.M."/>
            <person name="Daugherty S."/>
            <person name="Dodson R.J."/>
            <person name="Madupu R."/>
            <person name="Brown J.L."/>
            <person name="Bruce D."/>
            <person name="Detter C."/>
            <person name="Munk C."/>
            <person name="Smith L.A."/>
            <person name="Smith T.J."/>
            <person name="White O."/>
            <person name="Brettin T.S."/>
        </authorList>
    </citation>
    <scope>NUCLEOTIDE SEQUENCE [LARGE SCALE GENOMIC DNA]</scope>
    <source>
        <strain>Langeland / NCTC 10281 / Type F</strain>
    </source>
</reference>
<organism>
    <name type="scientific">Clostridium botulinum (strain Langeland / NCTC 10281 / Type F)</name>
    <dbReference type="NCBI Taxonomy" id="441772"/>
    <lineage>
        <taxon>Bacteria</taxon>
        <taxon>Bacillati</taxon>
        <taxon>Bacillota</taxon>
        <taxon>Clostridia</taxon>
        <taxon>Eubacteriales</taxon>
        <taxon>Clostridiaceae</taxon>
        <taxon>Clostridium</taxon>
    </lineage>
</organism>
<sequence>MISAKMVKDLREKTGAGMMDCKKALTECDGDLEKAVEVLREKGLAAAAKKSGRVAAEGIVSTYISEDMKNGSIVEFNCETDFVSVNELFVELANNLSKQAAFSNVSTAEELLEEKYIADESKLVKDVITELIAKLGENMNLRRIAKLSVDKGVITSYIHGGGRIGVLVKLACEKEDAKLAEIAKDVAMQVAATNPLFLNRDGVDTDTLEKEKEIYRVQALNEGKPEKVVEKMVMGRINKYYKENCLVEQLWVKNGDYTITKYLQEQSKEIGADITVEAFVRYEKGEGIEKKEEDFAEEVQRQMNQGK</sequence>
<keyword id="KW-0963">Cytoplasm</keyword>
<keyword id="KW-0251">Elongation factor</keyword>
<keyword id="KW-0648">Protein biosynthesis</keyword>
<comment type="function">
    <text evidence="1">Associates with the EF-Tu.GDP complex and induces the exchange of GDP to GTP. It remains bound to the aminoacyl-tRNA.EF-Tu.GTP complex up to the GTP hydrolysis stage on the ribosome.</text>
</comment>
<comment type="subcellular location">
    <subcellularLocation>
        <location evidence="1">Cytoplasm</location>
    </subcellularLocation>
</comment>
<comment type="similarity">
    <text evidence="1">Belongs to the EF-Ts family.</text>
</comment>
<gene>
    <name evidence="1" type="primary">tsf</name>
    <name type="ordered locus">CLI_2490</name>
</gene>
<name>EFTS_CLOBL</name>
<proteinExistence type="inferred from homology"/>
<dbReference type="EMBL" id="CP000728">
    <property type="protein sequence ID" value="ABS41607.1"/>
    <property type="molecule type" value="Genomic_DNA"/>
</dbReference>
<dbReference type="RefSeq" id="WP_003384678.1">
    <property type="nucleotide sequence ID" value="NC_009699.1"/>
</dbReference>
<dbReference type="SMR" id="A7GG22"/>
<dbReference type="GeneID" id="92939185"/>
<dbReference type="KEGG" id="cbf:CLI_2490"/>
<dbReference type="HOGENOM" id="CLU_047155_0_0_9"/>
<dbReference type="Proteomes" id="UP000002410">
    <property type="component" value="Chromosome"/>
</dbReference>
<dbReference type="GO" id="GO:0005737">
    <property type="term" value="C:cytoplasm"/>
    <property type="evidence" value="ECO:0007669"/>
    <property type="project" value="UniProtKB-SubCell"/>
</dbReference>
<dbReference type="GO" id="GO:0003746">
    <property type="term" value="F:translation elongation factor activity"/>
    <property type="evidence" value="ECO:0007669"/>
    <property type="project" value="UniProtKB-UniRule"/>
</dbReference>
<dbReference type="CDD" id="cd14275">
    <property type="entry name" value="UBA_EF-Ts"/>
    <property type="match status" value="1"/>
</dbReference>
<dbReference type="FunFam" id="1.10.286.20:FF:000001">
    <property type="entry name" value="Elongation factor Ts"/>
    <property type="match status" value="1"/>
</dbReference>
<dbReference type="FunFam" id="1.10.8.10:FF:000001">
    <property type="entry name" value="Elongation factor Ts"/>
    <property type="match status" value="1"/>
</dbReference>
<dbReference type="Gene3D" id="1.10.286.20">
    <property type="match status" value="1"/>
</dbReference>
<dbReference type="Gene3D" id="1.10.8.10">
    <property type="entry name" value="DNA helicase RuvA subunit, C-terminal domain"/>
    <property type="match status" value="1"/>
</dbReference>
<dbReference type="Gene3D" id="3.30.479.20">
    <property type="entry name" value="Elongation factor Ts, dimerisation domain"/>
    <property type="match status" value="2"/>
</dbReference>
<dbReference type="HAMAP" id="MF_00050">
    <property type="entry name" value="EF_Ts"/>
    <property type="match status" value="1"/>
</dbReference>
<dbReference type="InterPro" id="IPR036402">
    <property type="entry name" value="EF-Ts_dimer_sf"/>
</dbReference>
<dbReference type="InterPro" id="IPR001816">
    <property type="entry name" value="Transl_elong_EFTs/EF1B"/>
</dbReference>
<dbReference type="InterPro" id="IPR014039">
    <property type="entry name" value="Transl_elong_EFTs/EF1B_dimer"/>
</dbReference>
<dbReference type="InterPro" id="IPR018101">
    <property type="entry name" value="Transl_elong_Ts_CS"/>
</dbReference>
<dbReference type="InterPro" id="IPR009060">
    <property type="entry name" value="UBA-like_sf"/>
</dbReference>
<dbReference type="NCBIfam" id="TIGR00116">
    <property type="entry name" value="tsf"/>
    <property type="match status" value="1"/>
</dbReference>
<dbReference type="PANTHER" id="PTHR11741">
    <property type="entry name" value="ELONGATION FACTOR TS"/>
    <property type="match status" value="1"/>
</dbReference>
<dbReference type="PANTHER" id="PTHR11741:SF0">
    <property type="entry name" value="ELONGATION FACTOR TS, MITOCHONDRIAL"/>
    <property type="match status" value="1"/>
</dbReference>
<dbReference type="Pfam" id="PF00889">
    <property type="entry name" value="EF_TS"/>
    <property type="match status" value="1"/>
</dbReference>
<dbReference type="SUPFAM" id="SSF54713">
    <property type="entry name" value="Elongation factor Ts (EF-Ts), dimerisation domain"/>
    <property type="match status" value="2"/>
</dbReference>
<dbReference type="SUPFAM" id="SSF46934">
    <property type="entry name" value="UBA-like"/>
    <property type="match status" value="1"/>
</dbReference>
<dbReference type="PROSITE" id="PS01126">
    <property type="entry name" value="EF_TS_1"/>
    <property type="match status" value="1"/>
</dbReference>
<feature type="chain" id="PRO_1000006078" description="Elongation factor Ts">
    <location>
        <begin position="1"/>
        <end position="307"/>
    </location>
</feature>
<feature type="region of interest" description="Involved in Mg(2+) ion dislocation from EF-Tu" evidence="1">
    <location>
        <begin position="80"/>
        <end position="83"/>
    </location>
</feature>
<accession>A7GG22</accession>
<evidence type="ECO:0000255" key="1">
    <source>
        <dbReference type="HAMAP-Rule" id="MF_00050"/>
    </source>
</evidence>
<protein>
    <recommendedName>
        <fullName evidence="1">Elongation factor Ts</fullName>
        <shortName evidence="1">EF-Ts</shortName>
    </recommendedName>
</protein>